<keyword id="KW-0677">Repeat</keyword>
<keyword id="KW-0964">Secreted</keyword>
<keyword id="KW-0732">Signal</keyword>
<organism>
    <name type="scientific">Colobus guereza</name>
    <name type="common">Mantled guereza</name>
    <name type="synonym">Eastern black-and-white colobus monkey</name>
    <dbReference type="NCBI Taxonomy" id="33548"/>
    <lineage>
        <taxon>Eukaryota</taxon>
        <taxon>Metazoa</taxon>
        <taxon>Chordata</taxon>
        <taxon>Craniata</taxon>
        <taxon>Vertebrata</taxon>
        <taxon>Euteleostomi</taxon>
        <taxon>Mammalia</taxon>
        <taxon>Eutheria</taxon>
        <taxon>Euarchontoglires</taxon>
        <taxon>Primates</taxon>
        <taxon>Haplorrhini</taxon>
        <taxon>Catarrhini</taxon>
        <taxon>Cercopithecidae</taxon>
        <taxon>Colobinae</taxon>
        <taxon>Colobus</taxon>
    </lineage>
</organism>
<sequence length="582" mass="65654">MKSIILFVLSLLLILEKQAAVMGQKGGSKGQLSSGSSRFPHRQRSQHYSGQKDKQHTESKGSSSIQHTYHVDANDHDQTQKSQQYDLNAQHKTTKSEQHLGRSQRLLNYKQKGRDHVKPKRHFRLIVIHRKGGQVHHGTQNPSQNQGNSPSGKGISSQYSNTEERLRVCGLSKEQASASGAQKGRTQGGSQSSYVLQTEELVANKQQRETQNSHRNKGHYQNVVEVREGHSSKLQTSLHPAHQHRLQHGSKDIFTTQDELLVYNKNQHQTKNLNQDQEHGRKAHKVSYQSSSTEERQFNHGEKSVQKDVPKGSISIQTEEKIYGKSQNQVSIPSQDQEHGHKENKISYQSSSTEERRLNCGEKDIQKGVSKGGISIQTEEQIHGEFQNQVTISNQDQEHGHKENKISYQSSSTEERRLNGGEKDIQKSVSKGSISIQTEEKIHGKSQNQVTIPSQDQEHGHKENKISYQSSSTEERQLNYGGKSIQKDVSQSSLSFQTEKLVEGKSQIQTPNPNQDQWSGLNAKGNSGKSADREQDLLSHEQESRYQQKSSGAHNTVNIEHEVAYDDLLTQQYNEDRNPIST</sequence>
<gene>
    <name type="primary">SEMG2</name>
</gene>
<evidence type="ECO:0000250" key="1"/>
<evidence type="ECO:0000255" key="2"/>
<evidence type="ECO:0000256" key="3">
    <source>
        <dbReference type="SAM" id="MobiDB-lite"/>
    </source>
</evidence>
<evidence type="ECO:0000305" key="4"/>
<accession>Q5U7M8</accession>
<reference key="1">
    <citation type="journal article" date="2004" name="Nat. Genet.">
        <title>Rate of molecular evolution of the seminal protein gene SEMG2 correlates with levels of female promiscuity.</title>
        <authorList>
            <person name="Dorus S."/>
            <person name="Evans P.D."/>
            <person name="Wyckoff G.J."/>
            <person name="Choi S.S."/>
            <person name="Lahn B.T."/>
        </authorList>
    </citation>
    <scope>NUCLEOTIDE SEQUENCE [MRNA]</scope>
</reference>
<proteinExistence type="evidence at transcript level"/>
<dbReference type="EMBL" id="AY781392">
    <property type="protein sequence ID" value="AAV51950.1"/>
    <property type="molecule type" value="mRNA"/>
</dbReference>
<dbReference type="SMR" id="Q5U7M8"/>
<dbReference type="GO" id="GO:0070062">
    <property type="term" value="C:extracellular exosome"/>
    <property type="evidence" value="ECO:0007669"/>
    <property type="project" value="TreeGrafter"/>
</dbReference>
<dbReference type="GO" id="GO:0050817">
    <property type="term" value="P:coagulation"/>
    <property type="evidence" value="ECO:0007669"/>
    <property type="project" value="InterPro"/>
</dbReference>
<dbReference type="GO" id="GO:1901318">
    <property type="term" value="P:negative regulation of flagellated sperm motility"/>
    <property type="evidence" value="ECO:0007669"/>
    <property type="project" value="InterPro"/>
</dbReference>
<dbReference type="GO" id="GO:0048240">
    <property type="term" value="P:sperm capacitation"/>
    <property type="evidence" value="ECO:0007669"/>
    <property type="project" value="TreeGrafter"/>
</dbReference>
<dbReference type="InterPro" id="IPR008836">
    <property type="entry name" value="Semenogelin"/>
</dbReference>
<dbReference type="PANTHER" id="PTHR10547:SF6">
    <property type="entry name" value="SEMENOGELIN-2"/>
    <property type="match status" value="1"/>
</dbReference>
<dbReference type="PANTHER" id="PTHR10547">
    <property type="entry name" value="SEMENOGELIN/SEMINAL VESICLE SECRETORY PROTEIN"/>
    <property type="match status" value="1"/>
</dbReference>
<dbReference type="Pfam" id="PF05474">
    <property type="entry name" value="Semenogelin"/>
    <property type="match status" value="1"/>
</dbReference>
<comment type="function">
    <text evidence="1">Participates in the formation of a gel matrix (sperm coagulum) entrapping the accessory gland secretions and ejaculated spermatozoa.</text>
</comment>
<comment type="subunit">
    <text evidence="1">Interacts with SERPINA5.</text>
</comment>
<comment type="subcellular location">
    <subcellularLocation>
        <location evidence="1">Secreted</location>
    </subcellularLocation>
</comment>
<comment type="similarity">
    <text evidence="4">Belongs to the semenogelin family.</text>
</comment>
<protein>
    <recommendedName>
        <fullName>Semenogelin-2</fullName>
    </recommendedName>
    <alternativeName>
        <fullName>Semenogelin II</fullName>
        <shortName>SGII</shortName>
    </alternativeName>
</protein>
<name>SEMG2_COLGU</name>
<feature type="signal peptide" evidence="2">
    <location>
        <begin position="1"/>
        <end position="23"/>
    </location>
</feature>
<feature type="chain" id="PRO_0000032357" description="Semenogelin-2">
    <location>
        <begin position="24"/>
        <end position="582"/>
    </location>
</feature>
<feature type="region of interest" description="Disordered" evidence="3">
    <location>
        <begin position="25"/>
        <end position="65"/>
    </location>
</feature>
<feature type="region of interest" description="Disordered" evidence="3">
    <location>
        <begin position="91"/>
        <end position="157"/>
    </location>
</feature>
<feature type="region of interest" description="Disordered" evidence="3">
    <location>
        <begin position="171"/>
        <end position="192"/>
    </location>
</feature>
<feature type="region of interest" description="Disordered" evidence="3">
    <location>
        <begin position="272"/>
        <end position="366"/>
    </location>
</feature>
<feature type="region of interest" description="Disordered" evidence="3">
    <location>
        <begin position="393"/>
        <end position="557"/>
    </location>
</feature>
<feature type="compositionally biased region" description="Basic and acidic residues" evidence="3">
    <location>
        <begin position="50"/>
        <end position="59"/>
    </location>
</feature>
<feature type="compositionally biased region" description="Basic residues" evidence="3">
    <location>
        <begin position="111"/>
        <end position="134"/>
    </location>
</feature>
<feature type="compositionally biased region" description="Polar residues" evidence="3">
    <location>
        <begin position="137"/>
        <end position="157"/>
    </location>
</feature>
<feature type="compositionally biased region" description="Polar residues" evidence="3">
    <location>
        <begin position="174"/>
        <end position="192"/>
    </location>
</feature>
<feature type="compositionally biased region" description="Basic and acidic residues" evidence="3">
    <location>
        <begin position="293"/>
        <end position="310"/>
    </location>
</feature>
<feature type="compositionally biased region" description="Polar residues" evidence="3">
    <location>
        <begin position="325"/>
        <end position="335"/>
    </location>
</feature>
<feature type="compositionally biased region" description="Basic and acidic residues" evidence="3">
    <location>
        <begin position="336"/>
        <end position="345"/>
    </location>
</feature>
<feature type="compositionally biased region" description="Basic and acidic residues" evidence="3">
    <location>
        <begin position="353"/>
        <end position="366"/>
    </location>
</feature>
<feature type="compositionally biased region" description="Basic and acidic residues" evidence="3">
    <location>
        <begin position="396"/>
        <end position="405"/>
    </location>
</feature>
<feature type="compositionally biased region" description="Basic and acidic residues" evidence="3">
    <location>
        <begin position="413"/>
        <end position="426"/>
    </location>
</feature>
<feature type="compositionally biased region" description="Polar residues" evidence="3">
    <location>
        <begin position="427"/>
        <end position="437"/>
    </location>
</feature>
<feature type="compositionally biased region" description="Polar residues" evidence="3">
    <location>
        <begin position="445"/>
        <end position="455"/>
    </location>
</feature>
<feature type="compositionally biased region" description="Basic and acidic residues" evidence="3">
    <location>
        <begin position="456"/>
        <end position="465"/>
    </location>
</feature>
<feature type="compositionally biased region" description="Polar residues" evidence="3">
    <location>
        <begin position="487"/>
        <end position="498"/>
    </location>
</feature>
<feature type="compositionally biased region" description="Polar residues" evidence="3">
    <location>
        <begin position="506"/>
        <end position="529"/>
    </location>
</feature>
<feature type="compositionally biased region" description="Basic and acidic residues" evidence="3">
    <location>
        <begin position="530"/>
        <end position="546"/>
    </location>
</feature>
<feature type="compositionally biased region" description="Polar residues" evidence="3">
    <location>
        <begin position="547"/>
        <end position="557"/>
    </location>
</feature>